<protein>
    <recommendedName>
        <fullName evidence="1">Ribosomal RNA large subunit methyltransferase M</fullName>
        <ecNumber evidence="1">2.1.1.186</ecNumber>
    </recommendedName>
    <alternativeName>
        <fullName evidence="1">23S rRNA (cytidine2498-2'-O)-methyltransferase</fullName>
    </alternativeName>
    <alternativeName>
        <fullName evidence="1">23S rRNA 2'-O-ribose methyltransferase RlmM</fullName>
    </alternativeName>
</protein>
<dbReference type="EC" id="2.1.1.186" evidence="1"/>
<dbReference type="EMBL" id="CP000680">
    <property type="protein sequence ID" value="ABP84666.1"/>
    <property type="molecule type" value="Genomic_DNA"/>
</dbReference>
<dbReference type="SMR" id="A4XTK0"/>
<dbReference type="STRING" id="399739.Pmen_1904"/>
<dbReference type="KEGG" id="pmy:Pmen_1904"/>
<dbReference type="PATRIC" id="fig|399739.8.peg.1927"/>
<dbReference type="eggNOG" id="COG2933">
    <property type="taxonomic scope" value="Bacteria"/>
</dbReference>
<dbReference type="HOGENOM" id="CLU_043780_0_0_6"/>
<dbReference type="OrthoDB" id="154490at2"/>
<dbReference type="GO" id="GO:0005737">
    <property type="term" value="C:cytoplasm"/>
    <property type="evidence" value="ECO:0007669"/>
    <property type="project" value="UniProtKB-SubCell"/>
</dbReference>
<dbReference type="GO" id="GO:0008757">
    <property type="term" value="F:S-adenosylmethionine-dependent methyltransferase activity"/>
    <property type="evidence" value="ECO:0007669"/>
    <property type="project" value="UniProtKB-UniRule"/>
</dbReference>
<dbReference type="GO" id="GO:0032259">
    <property type="term" value="P:methylation"/>
    <property type="evidence" value="ECO:0007669"/>
    <property type="project" value="UniProtKB-KW"/>
</dbReference>
<dbReference type="GO" id="GO:0006364">
    <property type="term" value="P:rRNA processing"/>
    <property type="evidence" value="ECO:0007669"/>
    <property type="project" value="UniProtKB-UniRule"/>
</dbReference>
<dbReference type="Gene3D" id="3.30.2300.20">
    <property type="match status" value="1"/>
</dbReference>
<dbReference type="Gene3D" id="3.30.70.2810">
    <property type="match status" value="1"/>
</dbReference>
<dbReference type="Gene3D" id="3.40.50.150">
    <property type="entry name" value="Vaccinia Virus protein VP39"/>
    <property type="match status" value="1"/>
</dbReference>
<dbReference type="HAMAP" id="MF_01551">
    <property type="entry name" value="23SrRNA_methyltr_M"/>
    <property type="match status" value="1"/>
</dbReference>
<dbReference type="InterPro" id="IPR040739">
    <property type="entry name" value="RlmM_FDX"/>
</dbReference>
<dbReference type="InterPro" id="IPR048646">
    <property type="entry name" value="RlmM_THUMP-like"/>
</dbReference>
<dbReference type="InterPro" id="IPR002877">
    <property type="entry name" value="RNA_MeTrfase_FtsJ_dom"/>
</dbReference>
<dbReference type="InterPro" id="IPR011224">
    <property type="entry name" value="rRNA_MeTrfase_M"/>
</dbReference>
<dbReference type="InterPro" id="IPR029063">
    <property type="entry name" value="SAM-dependent_MTases_sf"/>
</dbReference>
<dbReference type="NCBIfam" id="NF008734">
    <property type="entry name" value="PRK11760.1"/>
    <property type="match status" value="1"/>
</dbReference>
<dbReference type="PANTHER" id="PTHR37524">
    <property type="entry name" value="RIBOSOMAL RNA LARGE SUBUNIT METHYLTRANSFERASE M"/>
    <property type="match status" value="1"/>
</dbReference>
<dbReference type="PANTHER" id="PTHR37524:SF2">
    <property type="entry name" value="RIBOSOMAL RNA METHYLTRANSFERASE FTSJ DOMAIN-CONTAINING PROTEIN"/>
    <property type="match status" value="1"/>
</dbReference>
<dbReference type="Pfam" id="PF01728">
    <property type="entry name" value="FtsJ"/>
    <property type="match status" value="1"/>
</dbReference>
<dbReference type="Pfam" id="PF18125">
    <property type="entry name" value="RlmM_FDX"/>
    <property type="match status" value="1"/>
</dbReference>
<dbReference type="Pfam" id="PF21239">
    <property type="entry name" value="RLMM_N"/>
    <property type="match status" value="1"/>
</dbReference>
<dbReference type="PIRSF" id="PIRSF028774">
    <property type="entry name" value="UCP028774"/>
    <property type="match status" value="1"/>
</dbReference>
<dbReference type="SUPFAM" id="SSF53335">
    <property type="entry name" value="S-adenosyl-L-methionine-dependent methyltransferases"/>
    <property type="match status" value="1"/>
</dbReference>
<gene>
    <name evidence="1" type="primary">rlmM</name>
    <name type="ordered locus">Pmen_1904</name>
</gene>
<name>RLMM_ECTM1</name>
<feature type="chain" id="PRO_0000314528" description="Ribosomal RNA large subunit methyltransferase M">
    <location>
        <begin position="1"/>
        <end position="351"/>
    </location>
</feature>
<feature type="active site" description="Proton acceptor" evidence="1">
    <location>
        <position position="300"/>
    </location>
</feature>
<feature type="binding site" evidence="1">
    <location>
        <position position="183"/>
    </location>
    <ligand>
        <name>S-adenosyl-L-methionine</name>
        <dbReference type="ChEBI" id="CHEBI:59789"/>
    </ligand>
</feature>
<feature type="binding site" evidence="1">
    <location>
        <begin position="216"/>
        <end position="219"/>
    </location>
    <ligand>
        <name>S-adenosyl-L-methionine</name>
        <dbReference type="ChEBI" id="CHEBI:59789"/>
    </ligand>
</feature>
<feature type="binding site" evidence="1">
    <location>
        <position position="235"/>
    </location>
    <ligand>
        <name>S-adenosyl-L-methionine</name>
        <dbReference type="ChEBI" id="CHEBI:59789"/>
    </ligand>
</feature>
<feature type="binding site" evidence="1">
    <location>
        <position position="255"/>
    </location>
    <ligand>
        <name>S-adenosyl-L-methionine</name>
        <dbReference type="ChEBI" id="CHEBI:59789"/>
    </ligand>
</feature>
<feature type="binding site" evidence="1">
    <location>
        <position position="271"/>
    </location>
    <ligand>
        <name>S-adenosyl-L-methionine</name>
        <dbReference type="ChEBI" id="CHEBI:59789"/>
    </ligand>
</feature>
<reference key="1">
    <citation type="submission" date="2007-04" db="EMBL/GenBank/DDBJ databases">
        <title>Complete sequence of Pseudomonas mendocina ymp.</title>
        <authorList>
            <consortium name="US DOE Joint Genome Institute"/>
            <person name="Copeland A."/>
            <person name="Lucas S."/>
            <person name="Lapidus A."/>
            <person name="Barry K."/>
            <person name="Glavina del Rio T."/>
            <person name="Dalin E."/>
            <person name="Tice H."/>
            <person name="Pitluck S."/>
            <person name="Kiss H."/>
            <person name="Brettin T."/>
            <person name="Detter J.C."/>
            <person name="Bruce D."/>
            <person name="Han C."/>
            <person name="Schmutz J."/>
            <person name="Larimer F."/>
            <person name="Land M."/>
            <person name="Hauser L."/>
            <person name="Kyrpides N."/>
            <person name="Mikhailova N."/>
            <person name="Hersman L."/>
            <person name="Dubois J."/>
            <person name="Maurice P."/>
            <person name="Richardson P."/>
        </authorList>
    </citation>
    <scope>NUCLEOTIDE SEQUENCE [LARGE SCALE GENOMIC DNA]</scope>
    <source>
        <strain>ymp</strain>
    </source>
</reference>
<proteinExistence type="inferred from homology"/>
<comment type="function">
    <text evidence="1">Catalyzes the 2'-O-methylation at nucleotide C2498 in 23S rRNA.</text>
</comment>
<comment type="catalytic activity">
    <reaction evidence="1">
        <text>cytidine(2498) in 23S rRNA + S-adenosyl-L-methionine = 2'-O-methylcytidine(2498) in 23S rRNA + S-adenosyl-L-homocysteine + H(+)</text>
        <dbReference type="Rhea" id="RHEA:42788"/>
        <dbReference type="Rhea" id="RHEA-COMP:10244"/>
        <dbReference type="Rhea" id="RHEA-COMP:10245"/>
        <dbReference type="ChEBI" id="CHEBI:15378"/>
        <dbReference type="ChEBI" id="CHEBI:57856"/>
        <dbReference type="ChEBI" id="CHEBI:59789"/>
        <dbReference type="ChEBI" id="CHEBI:74495"/>
        <dbReference type="ChEBI" id="CHEBI:82748"/>
        <dbReference type="EC" id="2.1.1.186"/>
    </reaction>
</comment>
<comment type="subunit">
    <text evidence="1">Monomer.</text>
</comment>
<comment type="subcellular location">
    <subcellularLocation>
        <location evidence="1">Cytoplasm</location>
    </subcellularLocation>
</comment>
<comment type="similarity">
    <text evidence="1">Belongs to the class I-like SAM-binding methyltransferase superfamily. RNA methyltransferase RlmE family. RlmM subfamily.</text>
</comment>
<evidence type="ECO:0000255" key="1">
    <source>
        <dbReference type="HAMAP-Rule" id="MF_01551"/>
    </source>
</evidence>
<organism>
    <name type="scientific">Ectopseudomonas mendocina (strain ymp)</name>
    <name type="common">Pseudomonas mendocina</name>
    <dbReference type="NCBI Taxonomy" id="399739"/>
    <lineage>
        <taxon>Bacteria</taxon>
        <taxon>Pseudomonadati</taxon>
        <taxon>Pseudomonadota</taxon>
        <taxon>Gammaproteobacteria</taxon>
        <taxon>Pseudomonadales</taxon>
        <taxon>Pseudomonadaceae</taxon>
        <taxon>Ectopseudomonas</taxon>
    </lineage>
</organism>
<sequence length="351" mass="39591">MNTLFLHCRPGFEGEVCAEITDLAARLDVPGYSKAKPGSACAEFVCSEAADGERMMRSVRFNSLIFPRQWARGGFVMLPESDRISVLLDALADYPVCGSLWLEVVDTNDGKELSTFCKKFEAPLRKALLKAGKLVDDARKPRLLLTFKSGREVFAGIAEADNQAMWPMGIPRLKFPREAPSRSTLKLEEAWHHFIPREQWDQRLAPGMTAVDLGAAPGGWTWQLVNREIRVTAVDNGPMAESLMYSGFVVHQRADGFTFRPRHPVHWMVCDIVEKPARTAAMIETWLGEGLCREAVVNLKLPMKQRYAEVRRLLDRIESGLAERGLKVSIGCKQLYHDREEVTCHLRRHGK</sequence>
<keyword id="KW-0963">Cytoplasm</keyword>
<keyword id="KW-0489">Methyltransferase</keyword>
<keyword id="KW-0698">rRNA processing</keyword>
<keyword id="KW-0949">S-adenosyl-L-methionine</keyword>
<keyword id="KW-0808">Transferase</keyword>
<accession>A4XTK0</accession>